<comment type="function">
    <text evidence="1">Nucleotidase that shows phosphatase activity on nucleoside 5'-monophosphates.</text>
</comment>
<comment type="catalytic activity">
    <reaction evidence="1">
        <text>a ribonucleoside 5'-phosphate + H2O = a ribonucleoside + phosphate</text>
        <dbReference type="Rhea" id="RHEA:12484"/>
        <dbReference type="ChEBI" id="CHEBI:15377"/>
        <dbReference type="ChEBI" id="CHEBI:18254"/>
        <dbReference type="ChEBI" id="CHEBI:43474"/>
        <dbReference type="ChEBI" id="CHEBI:58043"/>
        <dbReference type="EC" id="3.1.3.5"/>
    </reaction>
</comment>
<comment type="cofactor">
    <cofactor evidence="1">
        <name>a divalent metal cation</name>
        <dbReference type="ChEBI" id="CHEBI:60240"/>
    </cofactor>
    <text evidence="1">Binds 1 divalent metal cation per subunit.</text>
</comment>
<comment type="subcellular location">
    <subcellularLocation>
        <location evidence="1">Cytoplasm</location>
    </subcellularLocation>
</comment>
<comment type="similarity">
    <text evidence="1">Belongs to the SurE nucleotidase family.</text>
</comment>
<sequence length="249" mass="26605">MRILISNDDGVNAPGLVALHAALADYAECVVIAPDQDKSGASSSLTLDRPLHPHTLANGFISLNGTPTDCVHLGIHGLLENQPDMVVSGINLGANLGDDVLYSGTVAAALEGRFLQRPSFAFSFLSRQPDNLATAAHYARLLVEAHEQLDLPPRTVLNVNIPNLPLEHIRGIQLTRLGHRARAAAPVKVVDPRGRAGYWIAAAGDVEDGGAGTDFHAVIQGYVSITPLQLDRTYQDGFSSLNTWLEGLR</sequence>
<accession>Q48F87</accession>
<proteinExistence type="inferred from homology"/>
<feature type="chain" id="PRO_0000235640" description="5'-nucleotidase SurE">
    <location>
        <begin position="1"/>
        <end position="249"/>
    </location>
</feature>
<feature type="binding site" evidence="1">
    <location>
        <position position="8"/>
    </location>
    <ligand>
        <name>a divalent metal cation</name>
        <dbReference type="ChEBI" id="CHEBI:60240"/>
    </ligand>
</feature>
<feature type="binding site" evidence="1">
    <location>
        <position position="9"/>
    </location>
    <ligand>
        <name>a divalent metal cation</name>
        <dbReference type="ChEBI" id="CHEBI:60240"/>
    </ligand>
</feature>
<feature type="binding site" evidence="1">
    <location>
        <position position="39"/>
    </location>
    <ligand>
        <name>a divalent metal cation</name>
        <dbReference type="ChEBI" id="CHEBI:60240"/>
    </ligand>
</feature>
<feature type="binding site" evidence="1">
    <location>
        <position position="91"/>
    </location>
    <ligand>
        <name>a divalent metal cation</name>
        <dbReference type="ChEBI" id="CHEBI:60240"/>
    </ligand>
</feature>
<keyword id="KW-0963">Cytoplasm</keyword>
<keyword id="KW-0378">Hydrolase</keyword>
<keyword id="KW-0479">Metal-binding</keyword>
<keyword id="KW-0547">Nucleotide-binding</keyword>
<protein>
    <recommendedName>
        <fullName evidence="1">5'-nucleotidase SurE</fullName>
        <ecNumber evidence="1">3.1.3.5</ecNumber>
    </recommendedName>
    <alternativeName>
        <fullName evidence="1">Nucleoside 5'-monophosphate phosphohydrolase</fullName>
    </alternativeName>
</protein>
<name>SURE_PSE14</name>
<reference key="1">
    <citation type="journal article" date="2005" name="J. Bacteriol.">
        <title>Whole-genome sequence analysis of Pseudomonas syringae pv. phaseolicola 1448A reveals divergence among pathovars in genes involved in virulence and transposition.</title>
        <authorList>
            <person name="Joardar V."/>
            <person name="Lindeberg M."/>
            <person name="Jackson R.W."/>
            <person name="Selengut J."/>
            <person name="Dodson R."/>
            <person name="Brinkac L.M."/>
            <person name="Daugherty S.C."/>
            <person name="DeBoy R.T."/>
            <person name="Durkin A.S."/>
            <person name="Gwinn Giglio M."/>
            <person name="Madupu R."/>
            <person name="Nelson W.C."/>
            <person name="Rosovitz M.J."/>
            <person name="Sullivan S.A."/>
            <person name="Crabtree J."/>
            <person name="Creasy T."/>
            <person name="Davidsen T.M."/>
            <person name="Haft D.H."/>
            <person name="Zafar N."/>
            <person name="Zhou L."/>
            <person name="Halpin R."/>
            <person name="Holley T."/>
            <person name="Khouri H.M."/>
            <person name="Feldblyum T.V."/>
            <person name="White O."/>
            <person name="Fraser C.M."/>
            <person name="Chatterjee A.K."/>
            <person name="Cartinhour S."/>
            <person name="Schneider D."/>
            <person name="Mansfield J.W."/>
            <person name="Collmer A."/>
            <person name="Buell R."/>
        </authorList>
    </citation>
    <scope>NUCLEOTIDE SEQUENCE [LARGE SCALE GENOMIC DNA]</scope>
    <source>
        <strain>1448A / Race 6</strain>
    </source>
</reference>
<organism>
    <name type="scientific">Pseudomonas savastanoi pv. phaseolicola (strain 1448A / Race 6)</name>
    <name type="common">Pseudomonas syringae pv. phaseolicola (strain 1448A / Race 6)</name>
    <dbReference type="NCBI Taxonomy" id="264730"/>
    <lineage>
        <taxon>Bacteria</taxon>
        <taxon>Pseudomonadati</taxon>
        <taxon>Pseudomonadota</taxon>
        <taxon>Gammaproteobacteria</taxon>
        <taxon>Pseudomonadales</taxon>
        <taxon>Pseudomonadaceae</taxon>
        <taxon>Pseudomonas</taxon>
    </lineage>
</organism>
<evidence type="ECO:0000255" key="1">
    <source>
        <dbReference type="HAMAP-Rule" id="MF_00060"/>
    </source>
</evidence>
<dbReference type="EC" id="3.1.3.5" evidence="1"/>
<dbReference type="EMBL" id="CP000058">
    <property type="protein sequence ID" value="AAZ33033.1"/>
    <property type="molecule type" value="Genomic_DNA"/>
</dbReference>
<dbReference type="RefSeq" id="WP_011169286.1">
    <property type="nucleotide sequence ID" value="NC_005773.3"/>
</dbReference>
<dbReference type="SMR" id="Q48F87"/>
<dbReference type="KEGG" id="psp:PSPPH_3812"/>
<dbReference type="eggNOG" id="COG0496">
    <property type="taxonomic scope" value="Bacteria"/>
</dbReference>
<dbReference type="HOGENOM" id="CLU_045192_1_2_6"/>
<dbReference type="Proteomes" id="UP000000551">
    <property type="component" value="Chromosome"/>
</dbReference>
<dbReference type="GO" id="GO:0005737">
    <property type="term" value="C:cytoplasm"/>
    <property type="evidence" value="ECO:0007669"/>
    <property type="project" value="UniProtKB-SubCell"/>
</dbReference>
<dbReference type="GO" id="GO:0008254">
    <property type="term" value="F:3'-nucleotidase activity"/>
    <property type="evidence" value="ECO:0007669"/>
    <property type="project" value="TreeGrafter"/>
</dbReference>
<dbReference type="GO" id="GO:0008253">
    <property type="term" value="F:5'-nucleotidase activity"/>
    <property type="evidence" value="ECO:0007669"/>
    <property type="project" value="UniProtKB-UniRule"/>
</dbReference>
<dbReference type="GO" id="GO:0004309">
    <property type="term" value="F:exopolyphosphatase activity"/>
    <property type="evidence" value="ECO:0007669"/>
    <property type="project" value="TreeGrafter"/>
</dbReference>
<dbReference type="GO" id="GO:0046872">
    <property type="term" value="F:metal ion binding"/>
    <property type="evidence" value="ECO:0007669"/>
    <property type="project" value="UniProtKB-UniRule"/>
</dbReference>
<dbReference type="GO" id="GO:0000166">
    <property type="term" value="F:nucleotide binding"/>
    <property type="evidence" value="ECO:0007669"/>
    <property type="project" value="UniProtKB-KW"/>
</dbReference>
<dbReference type="FunFam" id="3.40.1210.10:FF:000001">
    <property type="entry name" value="5'/3'-nucleotidase SurE"/>
    <property type="match status" value="1"/>
</dbReference>
<dbReference type="Gene3D" id="3.40.1210.10">
    <property type="entry name" value="Survival protein SurE-like phosphatase/nucleotidase"/>
    <property type="match status" value="1"/>
</dbReference>
<dbReference type="HAMAP" id="MF_00060">
    <property type="entry name" value="SurE"/>
    <property type="match status" value="1"/>
</dbReference>
<dbReference type="InterPro" id="IPR030048">
    <property type="entry name" value="SurE"/>
</dbReference>
<dbReference type="InterPro" id="IPR002828">
    <property type="entry name" value="SurE-like_Pase/nucleotidase"/>
</dbReference>
<dbReference type="InterPro" id="IPR036523">
    <property type="entry name" value="SurE-like_sf"/>
</dbReference>
<dbReference type="NCBIfam" id="NF001489">
    <property type="entry name" value="PRK00346.1-3"/>
    <property type="match status" value="1"/>
</dbReference>
<dbReference type="NCBIfam" id="NF001490">
    <property type="entry name" value="PRK00346.1-4"/>
    <property type="match status" value="1"/>
</dbReference>
<dbReference type="NCBIfam" id="TIGR00087">
    <property type="entry name" value="surE"/>
    <property type="match status" value="1"/>
</dbReference>
<dbReference type="PANTHER" id="PTHR30457">
    <property type="entry name" value="5'-NUCLEOTIDASE SURE"/>
    <property type="match status" value="1"/>
</dbReference>
<dbReference type="PANTHER" id="PTHR30457:SF12">
    <property type="entry name" value="5'_3'-NUCLEOTIDASE SURE"/>
    <property type="match status" value="1"/>
</dbReference>
<dbReference type="Pfam" id="PF01975">
    <property type="entry name" value="SurE"/>
    <property type="match status" value="1"/>
</dbReference>
<dbReference type="SUPFAM" id="SSF64167">
    <property type="entry name" value="SurE-like"/>
    <property type="match status" value="1"/>
</dbReference>
<gene>
    <name evidence="1" type="primary">surE</name>
    <name type="ordered locus">PSPPH_3812</name>
</gene>